<comment type="function">
    <text evidence="1">Catalyzes the conversion of N-formimidoyl-L-glutamate to L-glutamate and formamide.</text>
</comment>
<comment type="catalytic activity">
    <reaction evidence="1">
        <text>N-formimidoyl-L-glutamate + H2O = formamide + L-glutamate</text>
        <dbReference type="Rhea" id="RHEA:22492"/>
        <dbReference type="ChEBI" id="CHEBI:15377"/>
        <dbReference type="ChEBI" id="CHEBI:16397"/>
        <dbReference type="ChEBI" id="CHEBI:29985"/>
        <dbReference type="ChEBI" id="CHEBI:58928"/>
        <dbReference type="EC" id="3.5.3.8"/>
    </reaction>
</comment>
<comment type="cofactor">
    <cofactor evidence="1">
        <name>Mn(2+)</name>
        <dbReference type="ChEBI" id="CHEBI:29035"/>
    </cofactor>
    <text evidence="1">Binds 2 manganese ions per subunit.</text>
</comment>
<comment type="pathway">
    <text evidence="1">Amino-acid degradation; L-histidine degradation into L-glutamate; L-glutamate from N-formimidoyl-L-glutamate (hydrolase route): step 1/1.</text>
</comment>
<comment type="similarity">
    <text evidence="1">Belongs to the arginase family.</text>
</comment>
<dbReference type="EC" id="3.5.3.8" evidence="1"/>
<dbReference type="EMBL" id="CP000026">
    <property type="protein sequence ID" value="AAV77872.1"/>
    <property type="molecule type" value="Genomic_DNA"/>
</dbReference>
<dbReference type="RefSeq" id="WP_000195669.1">
    <property type="nucleotide sequence ID" value="NC_006511.1"/>
</dbReference>
<dbReference type="SMR" id="Q5PG59"/>
<dbReference type="KEGG" id="spt:SPA1964"/>
<dbReference type="HOGENOM" id="CLU_039478_2_0_6"/>
<dbReference type="UniPathway" id="UPA00379">
    <property type="reaction ID" value="UER00552"/>
</dbReference>
<dbReference type="Proteomes" id="UP000008185">
    <property type="component" value="Chromosome"/>
</dbReference>
<dbReference type="GO" id="GO:0008783">
    <property type="term" value="F:agmatinase activity"/>
    <property type="evidence" value="ECO:0007669"/>
    <property type="project" value="TreeGrafter"/>
</dbReference>
<dbReference type="GO" id="GO:0050415">
    <property type="term" value="F:formimidoylglutamase activity"/>
    <property type="evidence" value="ECO:0007669"/>
    <property type="project" value="UniProtKB-UniRule"/>
</dbReference>
<dbReference type="GO" id="GO:0030145">
    <property type="term" value="F:manganese ion binding"/>
    <property type="evidence" value="ECO:0007669"/>
    <property type="project" value="UniProtKB-UniRule"/>
</dbReference>
<dbReference type="GO" id="GO:0019556">
    <property type="term" value="P:L-histidine catabolic process to glutamate and formamide"/>
    <property type="evidence" value="ECO:0007669"/>
    <property type="project" value="UniProtKB-UniPathway"/>
</dbReference>
<dbReference type="GO" id="GO:0019557">
    <property type="term" value="P:L-histidine catabolic process to glutamate and formate"/>
    <property type="evidence" value="ECO:0007669"/>
    <property type="project" value="UniProtKB-UniPathway"/>
</dbReference>
<dbReference type="GO" id="GO:0033389">
    <property type="term" value="P:putrescine biosynthetic process from arginine, via agmatine"/>
    <property type="evidence" value="ECO:0007669"/>
    <property type="project" value="TreeGrafter"/>
</dbReference>
<dbReference type="CDD" id="cd09988">
    <property type="entry name" value="Formimidoylglutamase"/>
    <property type="match status" value="1"/>
</dbReference>
<dbReference type="FunFam" id="3.40.800.10:FF:000010">
    <property type="entry name" value="Formimidoylglutamase"/>
    <property type="match status" value="1"/>
</dbReference>
<dbReference type="Gene3D" id="3.40.800.10">
    <property type="entry name" value="Ureohydrolase domain"/>
    <property type="match status" value="1"/>
</dbReference>
<dbReference type="HAMAP" id="MF_00737">
    <property type="entry name" value="Formimidoylglutam"/>
    <property type="match status" value="1"/>
</dbReference>
<dbReference type="InterPro" id="IPR005923">
    <property type="entry name" value="HutG"/>
</dbReference>
<dbReference type="InterPro" id="IPR006035">
    <property type="entry name" value="Ureohydrolase"/>
</dbReference>
<dbReference type="InterPro" id="IPR023696">
    <property type="entry name" value="Ureohydrolase_dom_sf"/>
</dbReference>
<dbReference type="NCBIfam" id="TIGR01227">
    <property type="entry name" value="hutG"/>
    <property type="match status" value="1"/>
</dbReference>
<dbReference type="PANTHER" id="PTHR11358">
    <property type="entry name" value="ARGINASE/AGMATINASE"/>
    <property type="match status" value="1"/>
</dbReference>
<dbReference type="PANTHER" id="PTHR11358:SF35">
    <property type="entry name" value="FORMIMIDOYLGLUTAMASE"/>
    <property type="match status" value="1"/>
</dbReference>
<dbReference type="Pfam" id="PF00491">
    <property type="entry name" value="Arginase"/>
    <property type="match status" value="1"/>
</dbReference>
<dbReference type="PIRSF" id="PIRSF036979">
    <property type="entry name" value="Arginase"/>
    <property type="match status" value="1"/>
</dbReference>
<dbReference type="SUPFAM" id="SSF52768">
    <property type="entry name" value="Arginase/deacetylase"/>
    <property type="match status" value="1"/>
</dbReference>
<dbReference type="PROSITE" id="PS51409">
    <property type="entry name" value="ARGINASE_2"/>
    <property type="match status" value="1"/>
</dbReference>
<reference key="1">
    <citation type="journal article" date="2004" name="Nat. Genet.">
        <title>Comparison of genome degradation in Paratyphi A and Typhi, human-restricted serovars of Salmonella enterica that cause typhoid.</title>
        <authorList>
            <person name="McClelland M."/>
            <person name="Sanderson K.E."/>
            <person name="Clifton S.W."/>
            <person name="Latreille P."/>
            <person name="Porwollik S."/>
            <person name="Sabo A."/>
            <person name="Meyer R."/>
            <person name="Bieri T."/>
            <person name="Ozersky P."/>
            <person name="McLellan M."/>
            <person name="Harkins C.R."/>
            <person name="Wang C."/>
            <person name="Nguyen C."/>
            <person name="Berghoff A."/>
            <person name="Elliott G."/>
            <person name="Kohlberg S."/>
            <person name="Strong C."/>
            <person name="Du F."/>
            <person name="Carter J."/>
            <person name="Kremizki C."/>
            <person name="Layman D."/>
            <person name="Leonard S."/>
            <person name="Sun H."/>
            <person name="Fulton L."/>
            <person name="Nash W."/>
            <person name="Miner T."/>
            <person name="Minx P."/>
            <person name="Delehaunty K."/>
            <person name="Fronick C."/>
            <person name="Magrini V."/>
            <person name="Nhan M."/>
            <person name="Warren W."/>
            <person name="Florea L."/>
            <person name="Spieth J."/>
            <person name="Wilson R.K."/>
        </authorList>
    </citation>
    <scope>NUCLEOTIDE SEQUENCE [LARGE SCALE GENOMIC DNA]</scope>
    <source>
        <strain>ATCC 9150 / SARB42</strain>
    </source>
</reference>
<gene>
    <name evidence="1" type="primary">hutG</name>
    <name type="ordered locus">SPA1964</name>
</gene>
<sequence>MTQWYPASPALWQGRDDSIEAPDARRLFQAITRSEAFSPENWQQKIALMGFACDEGVKRNAGRPGAAGGPDALRKALANMASHQGHERLVDLGNWVAPTPDLEGAQQALRDAVSRCLRAGMRTLVLGGGHETAFGHGAGVLDAFAQESVGIINLDAHLDLRQTDRATSGTPFRQLAQLCDAQSRAFHYACFGVSRAANTQALWREAQWRNVTVVEDLDCHDALAQMTQFIDKVDKIYLTIDLDVLPVWEMPAVSAPAALGVPLIQVLRLIDPVCRSGKLQAADLVEFNPRFDEDGAAARVAARLGWQIAHWWR</sequence>
<feature type="chain" id="PRO_0000258260" description="Formimidoylglutamase">
    <location>
        <begin position="1"/>
        <end position="313"/>
    </location>
</feature>
<feature type="binding site" evidence="1">
    <location>
        <position position="130"/>
    </location>
    <ligand>
        <name>Mn(2+)</name>
        <dbReference type="ChEBI" id="CHEBI:29035"/>
        <label>1</label>
    </ligand>
</feature>
<feature type="binding site" evidence="1">
    <location>
        <position position="155"/>
    </location>
    <ligand>
        <name>Mn(2+)</name>
        <dbReference type="ChEBI" id="CHEBI:29035"/>
        <label>1</label>
    </ligand>
</feature>
<feature type="binding site" evidence="1">
    <location>
        <position position="155"/>
    </location>
    <ligand>
        <name>Mn(2+)</name>
        <dbReference type="ChEBI" id="CHEBI:29035"/>
        <label>2</label>
    </ligand>
</feature>
<feature type="binding site" evidence="1">
    <location>
        <position position="157"/>
    </location>
    <ligand>
        <name>Mn(2+)</name>
        <dbReference type="ChEBI" id="CHEBI:29035"/>
        <label>2</label>
    </ligand>
</feature>
<feature type="binding site" evidence="1">
    <location>
        <position position="159"/>
    </location>
    <ligand>
        <name>Mn(2+)</name>
        <dbReference type="ChEBI" id="CHEBI:29035"/>
        <label>1</label>
    </ligand>
</feature>
<feature type="binding site" evidence="1">
    <location>
        <position position="241"/>
    </location>
    <ligand>
        <name>Mn(2+)</name>
        <dbReference type="ChEBI" id="CHEBI:29035"/>
        <label>1</label>
    </ligand>
</feature>
<feature type="binding site" evidence="1">
    <location>
        <position position="241"/>
    </location>
    <ligand>
        <name>Mn(2+)</name>
        <dbReference type="ChEBI" id="CHEBI:29035"/>
        <label>2</label>
    </ligand>
</feature>
<feature type="binding site" evidence="1">
    <location>
        <position position="243"/>
    </location>
    <ligand>
        <name>Mn(2+)</name>
        <dbReference type="ChEBI" id="CHEBI:29035"/>
        <label>2</label>
    </ligand>
</feature>
<name>HUTG_SALPA</name>
<evidence type="ECO:0000255" key="1">
    <source>
        <dbReference type="HAMAP-Rule" id="MF_00737"/>
    </source>
</evidence>
<protein>
    <recommendedName>
        <fullName evidence="1">Formimidoylglutamase</fullName>
        <ecNumber evidence="1">3.5.3.8</ecNumber>
    </recommendedName>
    <alternativeName>
        <fullName evidence="1">Formiminoglutamase</fullName>
    </alternativeName>
    <alternativeName>
        <fullName evidence="1">Formiminoglutamate hydrolase</fullName>
    </alternativeName>
</protein>
<keyword id="KW-0369">Histidine metabolism</keyword>
<keyword id="KW-0378">Hydrolase</keyword>
<keyword id="KW-0464">Manganese</keyword>
<keyword id="KW-0479">Metal-binding</keyword>
<proteinExistence type="inferred from homology"/>
<organism>
    <name type="scientific">Salmonella paratyphi A (strain ATCC 9150 / SARB42)</name>
    <dbReference type="NCBI Taxonomy" id="295319"/>
    <lineage>
        <taxon>Bacteria</taxon>
        <taxon>Pseudomonadati</taxon>
        <taxon>Pseudomonadota</taxon>
        <taxon>Gammaproteobacteria</taxon>
        <taxon>Enterobacterales</taxon>
        <taxon>Enterobacteriaceae</taxon>
        <taxon>Salmonella</taxon>
    </lineage>
</organism>
<accession>Q5PG59</accession>